<organism>
    <name type="scientific">Oryctolagus cuniculus</name>
    <name type="common">Rabbit</name>
    <dbReference type="NCBI Taxonomy" id="9986"/>
    <lineage>
        <taxon>Eukaryota</taxon>
        <taxon>Metazoa</taxon>
        <taxon>Chordata</taxon>
        <taxon>Craniata</taxon>
        <taxon>Vertebrata</taxon>
        <taxon>Euteleostomi</taxon>
        <taxon>Mammalia</taxon>
        <taxon>Eutheria</taxon>
        <taxon>Euarchontoglires</taxon>
        <taxon>Glires</taxon>
        <taxon>Lagomorpha</taxon>
        <taxon>Leporidae</taxon>
        <taxon>Oryctolagus</taxon>
    </lineage>
</organism>
<comment type="function">
    <text>Inhibits factor X (X(a)) directly and, in a Xa-dependent way, inhibits VIIa/tissue factor activity, presumably by forming a quaternary Xa/LACI/VIIa/TF complex. It possesses an antithrombotic action and also the ability to associate with lipoproteins in plasma.</text>
</comment>
<comment type="subcellular location">
    <subcellularLocation>
        <location>Secreted</location>
    </subcellularLocation>
</comment>
<comment type="domain">
    <text evidence="1">This inhibitor contains three inhibitory domains. The first domain interacts with VIIa and TF, the second one with Xa (By similarity).</text>
</comment>
<protein>
    <recommendedName>
        <fullName>Tissue factor pathway inhibitor</fullName>
        <shortName>TFPI</shortName>
    </recommendedName>
    <alternativeName>
        <fullName>Extrinsic pathway inhibitor</fullName>
        <shortName>EPI</shortName>
    </alternativeName>
    <alternativeName>
        <fullName>Lipoprotein-associated coagulation inhibitor</fullName>
        <shortName>LACI</shortName>
    </alternativeName>
</protein>
<evidence type="ECO:0000250" key="1"/>
<evidence type="ECO:0000255" key="2"/>
<evidence type="ECO:0000255" key="3">
    <source>
        <dbReference type="PROSITE-ProRule" id="PRU00031"/>
    </source>
</evidence>
<evidence type="ECO:0000305" key="4"/>
<gene>
    <name type="primary">TFPI</name>
</gene>
<sequence length="300" mass="34436">MKKEHIFWTSICLLLGLVPAPVSSAAEEDEEFTNITDIKPPLQKPTHSFCAMKVDDGPCRAYIKRFFFNILTHQCEEFIYGGCEGNENRFESLEECKEKCARDYPKMTTKLTFQKGKPDFCFLEEDPGICRGYITRYFYNNQSKQCERFKYGGCLGNLNNFESLEECKNTCENPTSDFQVDDHRTQLNTVNNTLINQPTKAPRRWAFHGPSWCLPPADRGLCQANEIRFFYNAIIGKCRPFKYSGCGGNENNFTSKKACITACKKGFIPKSIKGGLIKTKRKKKKQPVKITYVETFVKKT</sequence>
<reference key="1">
    <citation type="journal article" date="1990" name="Nucleic Acids Res.">
        <title>cDNA sequence of rabbit lipoprotein-associated coagulation inhibitor.</title>
        <authorList>
            <person name="Wesselschmidt R.L."/>
            <person name="Girard T.J."/>
            <person name="Broze G.J. Jr."/>
        </authorList>
    </citation>
    <scope>NUCLEOTIDE SEQUENCE [MRNA]</scope>
    <source>
        <tissue>Liver</tissue>
    </source>
</reference>
<reference key="2">
    <citation type="journal article" date="1992" name="Nucleic Acids Res.">
        <title>cDNA sequence of rabbit tissue factor pathway inhibitor.</title>
        <authorList>
            <person name="Warn-Cramer B.J."/>
            <person name="Broze G.J. Jr."/>
            <person name="Komives E.A."/>
        </authorList>
    </citation>
    <scope>SEQUENCE REVISION TO 72; 211 AND 218</scope>
    <source>
        <tissue>Liver</tissue>
    </source>
</reference>
<reference key="3">
    <citation type="journal article" date="1993" name="Thromb. Res.">
        <title>Revised cDNA sequence of rabbit tissue factor pathway inhibitor.</title>
        <authorList>
            <person name="Belaaouaj A."/>
            <person name="Kuppuswamy M.N."/>
            <person name="Birktoft J.J."/>
            <person name="Bajaj S.P."/>
        </authorList>
    </citation>
    <scope>NUCLEOTIDE SEQUENCE [MRNA]</scope>
    <source>
        <tissue>Lung</tissue>
    </source>
</reference>
<dbReference type="EMBL" id="X54708">
    <property type="protein sequence ID" value="CAA38515.1"/>
    <property type="status" value="ALT_SEQ"/>
    <property type="molecule type" value="mRNA"/>
</dbReference>
<dbReference type="EMBL" id="S61902">
    <property type="protein sequence ID" value="AAB26836.1"/>
    <property type="molecule type" value="mRNA"/>
</dbReference>
<dbReference type="PIR" id="I46937">
    <property type="entry name" value="I46937"/>
</dbReference>
<dbReference type="PIR" id="S12143">
    <property type="entry name" value="S12143"/>
</dbReference>
<dbReference type="RefSeq" id="NP_001095184.1">
    <property type="nucleotide sequence ID" value="NM_001101714.1"/>
</dbReference>
<dbReference type="SMR" id="P19761"/>
<dbReference type="FunCoup" id="P19761">
    <property type="interactions" value="16"/>
</dbReference>
<dbReference type="STRING" id="9986.ENSOCUP00000007133"/>
<dbReference type="MEROPS" id="I02.011"/>
<dbReference type="MEROPS" id="I02.012"/>
<dbReference type="MEROPS" id="I02.950"/>
<dbReference type="GlyCosmos" id="P19761">
    <property type="glycosylation" value="3 sites, No reported glycans"/>
</dbReference>
<dbReference type="PaxDb" id="9986-ENSOCUP00000007133"/>
<dbReference type="ABCD" id="P19761">
    <property type="antibodies" value="34 sequenced antibodies"/>
</dbReference>
<dbReference type="GeneID" id="100009401"/>
<dbReference type="KEGG" id="ocu:100009401"/>
<dbReference type="CTD" id="7035"/>
<dbReference type="eggNOG" id="KOG4295">
    <property type="taxonomic scope" value="Eukaryota"/>
</dbReference>
<dbReference type="InParanoid" id="P19761"/>
<dbReference type="OrthoDB" id="5950222at2759"/>
<dbReference type="Proteomes" id="UP000001811">
    <property type="component" value="Unplaced"/>
</dbReference>
<dbReference type="GO" id="GO:0005615">
    <property type="term" value="C:extracellular space"/>
    <property type="evidence" value="ECO:0007669"/>
    <property type="project" value="TreeGrafter"/>
</dbReference>
<dbReference type="GO" id="GO:0004867">
    <property type="term" value="F:serine-type endopeptidase inhibitor activity"/>
    <property type="evidence" value="ECO:0007669"/>
    <property type="project" value="UniProtKB-KW"/>
</dbReference>
<dbReference type="GO" id="GO:0007596">
    <property type="term" value="P:blood coagulation"/>
    <property type="evidence" value="ECO:0007669"/>
    <property type="project" value="UniProtKB-KW"/>
</dbReference>
<dbReference type="CDD" id="cd22613">
    <property type="entry name" value="Kunitz_TFPI1_1-like"/>
    <property type="match status" value="1"/>
</dbReference>
<dbReference type="CDD" id="cd22614">
    <property type="entry name" value="Kunitz_TFPI1_2-like"/>
    <property type="match status" value="1"/>
</dbReference>
<dbReference type="CDD" id="cd22615">
    <property type="entry name" value="Kunitz_TFPI1_TFPI2_3-like"/>
    <property type="match status" value="1"/>
</dbReference>
<dbReference type="FunFam" id="4.10.410.10:FF:000004">
    <property type="entry name" value="Tissue factor pathway inhibitor"/>
    <property type="match status" value="1"/>
</dbReference>
<dbReference type="FunFam" id="4.10.410.10:FF:000012">
    <property type="entry name" value="Tissue factor pathway inhibitor"/>
    <property type="match status" value="1"/>
</dbReference>
<dbReference type="FunFam" id="4.10.410.10:FF:000013">
    <property type="entry name" value="Tissue factor pathway inhibitor"/>
    <property type="match status" value="1"/>
</dbReference>
<dbReference type="Gene3D" id="4.10.410.10">
    <property type="entry name" value="Pancreatic trypsin inhibitor Kunitz domain"/>
    <property type="match status" value="3"/>
</dbReference>
<dbReference type="InterPro" id="IPR002223">
    <property type="entry name" value="Kunitz_BPTI"/>
</dbReference>
<dbReference type="InterPro" id="IPR036880">
    <property type="entry name" value="Kunitz_BPTI_sf"/>
</dbReference>
<dbReference type="InterPro" id="IPR020901">
    <property type="entry name" value="Prtase_inh_Kunz-CS"/>
</dbReference>
<dbReference type="InterPro" id="IPR008296">
    <property type="entry name" value="TFPI-like"/>
</dbReference>
<dbReference type="InterPro" id="IPR050098">
    <property type="entry name" value="TFPI/VKTCI-like"/>
</dbReference>
<dbReference type="PANTHER" id="PTHR10083">
    <property type="entry name" value="KUNITZ-TYPE PROTEASE INHIBITOR-RELATED"/>
    <property type="match status" value="1"/>
</dbReference>
<dbReference type="PANTHER" id="PTHR10083:SF328">
    <property type="entry name" value="TISSUE FACTOR PATHWAY INHIBITOR"/>
    <property type="match status" value="1"/>
</dbReference>
<dbReference type="Pfam" id="PF00014">
    <property type="entry name" value="Kunitz_BPTI"/>
    <property type="match status" value="3"/>
</dbReference>
<dbReference type="PIRSF" id="PIRSF001620">
    <property type="entry name" value="TFPI"/>
    <property type="match status" value="1"/>
</dbReference>
<dbReference type="PRINTS" id="PR00759">
    <property type="entry name" value="BASICPTASE"/>
</dbReference>
<dbReference type="SMART" id="SM00131">
    <property type="entry name" value="KU"/>
    <property type="match status" value="3"/>
</dbReference>
<dbReference type="SUPFAM" id="SSF57362">
    <property type="entry name" value="BPTI-like"/>
    <property type="match status" value="3"/>
</dbReference>
<dbReference type="PROSITE" id="PS00280">
    <property type="entry name" value="BPTI_KUNITZ_1"/>
    <property type="match status" value="3"/>
</dbReference>
<dbReference type="PROSITE" id="PS50279">
    <property type="entry name" value="BPTI_KUNITZ_2"/>
    <property type="match status" value="3"/>
</dbReference>
<proteinExistence type="evidence at transcript level"/>
<keyword id="KW-0094">Blood coagulation</keyword>
<keyword id="KW-1015">Disulfide bond</keyword>
<keyword id="KW-0325">Glycoprotein</keyword>
<keyword id="KW-0356">Hemostasis</keyword>
<keyword id="KW-0646">Protease inhibitor</keyword>
<keyword id="KW-1185">Reference proteome</keyword>
<keyword id="KW-0677">Repeat</keyword>
<keyword id="KW-0964">Secreted</keyword>
<keyword id="KW-0722">Serine protease inhibitor</keyword>
<keyword id="KW-0732">Signal</keyword>
<feature type="signal peptide">
    <location>
        <begin position="1"/>
        <end position="24"/>
    </location>
</feature>
<feature type="chain" id="PRO_0000016874" description="Tissue factor pathway inhibitor">
    <location>
        <begin position="25"/>
        <end position="300"/>
    </location>
</feature>
<feature type="domain" description="BPTI/Kunitz inhibitor 1" evidence="3">
    <location>
        <begin position="50"/>
        <end position="100"/>
    </location>
</feature>
<feature type="domain" description="BPTI/Kunitz inhibitor 2" evidence="3">
    <location>
        <begin position="121"/>
        <end position="171"/>
    </location>
</feature>
<feature type="domain" description="BPTI/Kunitz inhibitor 3" evidence="3">
    <location>
        <begin position="213"/>
        <end position="263"/>
    </location>
</feature>
<feature type="site" description="Reactive bond" evidence="1">
    <location>
        <begin position="60"/>
        <end position="61"/>
    </location>
</feature>
<feature type="site" description="Reactive bond" evidence="1">
    <location>
        <begin position="131"/>
        <end position="132"/>
    </location>
</feature>
<feature type="site" description="Reactive bond" evidence="1">
    <location>
        <begin position="223"/>
        <end position="224"/>
    </location>
</feature>
<feature type="glycosylation site" description="N-linked (GlcNAc...) asparagine" evidence="2">
    <location>
        <position position="141"/>
    </location>
</feature>
<feature type="glycosylation site" description="N-linked (GlcNAc...) asparagine" evidence="2">
    <location>
        <position position="191"/>
    </location>
</feature>
<feature type="glycosylation site" description="N-linked (GlcNAc...) asparagine" evidence="2">
    <location>
        <position position="252"/>
    </location>
</feature>
<feature type="disulfide bond" evidence="3">
    <location>
        <begin position="50"/>
        <end position="100"/>
    </location>
</feature>
<feature type="disulfide bond" evidence="3">
    <location>
        <begin position="59"/>
        <end position="83"/>
    </location>
</feature>
<feature type="disulfide bond" evidence="3">
    <location>
        <begin position="75"/>
        <end position="96"/>
    </location>
</feature>
<feature type="disulfide bond" evidence="3">
    <location>
        <begin position="121"/>
        <end position="171"/>
    </location>
</feature>
<feature type="disulfide bond" evidence="3">
    <location>
        <begin position="130"/>
        <end position="154"/>
    </location>
</feature>
<feature type="disulfide bond" evidence="3">
    <location>
        <begin position="146"/>
        <end position="167"/>
    </location>
</feature>
<feature type="disulfide bond" evidence="3">
    <location>
        <begin position="213"/>
        <end position="263"/>
    </location>
</feature>
<feature type="disulfide bond" evidence="3">
    <location>
        <begin position="222"/>
        <end position="246"/>
    </location>
</feature>
<feature type="disulfide bond" evidence="3">
    <location>
        <begin position="238"/>
        <end position="259"/>
    </location>
</feature>
<feature type="sequence conflict" description="In Ref. 3; AAB26836." evidence="4" ref="3">
    <location>
        <position position="31"/>
    </location>
</feature>
<feature type="sequence conflict" description="In Ref. 3; AAB26836." evidence="4" ref="3">
    <original>PKSI</original>
    <variation>RNLS</variation>
    <location>
        <begin position="269"/>
        <end position="272"/>
    </location>
</feature>
<accession>P19761</accession>
<accession>Q28828</accession>
<name>TFPI1_RABIT</name>